<name>TPS26_MAIZE</name>
<keyword id="KW-0025">Alternative splicing</keyword>
<keyword id="KW-0150">Chloroplast</keyword>
<keyword id="KW-0170">Cobalt</keyword>
<keyword id="KW-0456">Lyase</keyword>
<keyword id="KW-0460">Magnesium</keyword>
<keyword id="KW-0464">Manganese</keyword>
<keyword id="KW-0479">Metal-binding</keyword>
<keyword id="KW-0934">Plastid</keyword>
<keyword id="KW-1185">Reference proteome</keyword>
<keyword id="KW-0809">Transit peptide</keyword>
<organism>
    <name type="scientific">Zea mays</name>
    <name type="common">Maize</name>
    <dbReference type="NCBI Taxonomy" id="4577"/>
    <lineage>
        <taxon>Eukaryota</taxon>
        <taxon>Viridiplantae</taxon>
        <taxon>Streptophyta</taxon>
        <taxon>Embryophyta</taxon>
        <taxon>Tracheophyta</taxon>
        <taxon>Spermatophyta</taxon>
        <taxon>Magnoliopsida</taxon>
        <taxon>Liliopsida</taxon>
        <taxon>Poales</taxon>
        <taxon>Poaceae</taxon>
        <taxon>PACMAD clade</taxon>
        <taxon>Panicoideae</taxon>
        <taxon>Andropogonodae</taxon>
        <taxon>Andropogoneae</taxon>
        <taxon>Tripsacinae</taxon>
        <taxon>Zea</taxon>
    </lineage>
</organism>
<sequence length="627" mass="70785">MAGITGVMNMKLAARPSSGRHSRGCRPAVVPSAGKQMLLVRRHPPGSASWPTRATGGGGGGVPAGATAADSSGQAKEEEEEDRASRNTSSFEPSIWGDFFLTYSSPLATSSAQKARMVHRAEQLKKQVAKLIAASGACSLYHRIHLVDALERLCLDYLFEDEINDMVTQIHNVDVSGCDLQTVAMWFYLLRNHGYRVSSDVVFAKFRDEQGGFAANNPRDLLNLYNAACLRTHGETILDEAASFTSKCLKSLAPYTYMEASLASEIKRALEIPLPRSVRIYGAKSRIAEYGNQTEANELVLELAKLNYNLVQLQHQEELKIITRWWNDLELQTRLSFARDRVVECYFWMVGVYFEPSYSRARVILSKVLAIVSLLDDTYDVYGTSQECELFTKCIESWDPAATGGRLPGNMKFIFAKILDTCQSFEDELAPDEKYRMHYLKTFIIDLVRAYNEEVKWREQGYVPATVEEHLQVSARSGGCHLLSCTSFVGMGDVADQEAFEWVRGVPKIVKALCIILRLSDDLKSYEREKMSSHVASTMESCMKEHQVPLEVARVKIQETIDETWKDFNEEWLNLNTNSHLPRELLERIFNLTRTMVYIYQQDDAYTNCHVIKDTINSLFVEPVSIT</sequence>
<evidence type="ECO:0000250" key="1">
    <source>
        <dbReference type="UniProtKB" id="B2C4D0"/>
    </source>
</evidence>
<evidence type="ECO:0000250" key="2">
    <source>
        <dbReference type="UniProtKB" id="Q40577"/>
    </source>
</evidence>
<evidence type="ECO:0000250" key="3">
    <source>
        <dbReference type="UniProtKB" id="Q5GJ60"/>
    </source>
</evidence>
<evidence type="ECO:0000250" key="4">
    <source>
        <dbReference type="UniProtKB" id="Q6JD73"/>
    </source>
</evidence>
<evidence type="ECO:0000255" key="5"/>
<evidence type="ECO:0000256" key="6">
    <source>
        <dbReference type="SAM" id="MobiDB-lite"/>
    </source>
</evidence>
<evidence type="ECO:0000269" key="7">
    <source>
    </source>
</evidence>
<evidence type="ECO:0000303" key="8">
    <source>
    </source>
</evidence>
<evidence type="ECO:0000303" key="9">
    <source>
    </source>
</evidence>
<evidence type="ECO:0000305" key="10"/>
<evidence type="ECO:0000305" key="11">
    <source>
    </source>
</evidence>
<evidence type="ECO:0000312" key="12">
    <source>
        <dbReference type="EMBL" id="AQK82824.1"/>
    </source>
</evidence>
<reference key="1">
    <citation type="journal article" date="2008" name="Plant Physiol.">
        <title>Characterization of the monoterpene synthase gene tps26, the ortholog of a gene induced by insect herbivory in maize.</title>
        <authorList>
            <person name="Lin C."/>
            <person name="Shen B."/>
            <person name="Xu Z."/>
            <person name="Koellner T.G."/>
            <person name="Degenhardt J."/>
            <person name="Dooner H.K."/>
        </authorList>
    </citation>
    <scope>NUCLEOTIDE SEQUENCE [GENOMIC DNA / MRNA] (ISOFORM 1)</scope>
    <scope>FUNCTION</scope>
    <scope>CATALYTIC ACTIVITY</scope>
    <scope>INDUCTION BY WOUNDING</scope>
    <scope>SUBCELLULAR LOCATION</scope>
    <scope>TISSUE SPECIFICITY</scope>
    <source>
        <strain>cv. KI3</strain>
        <strain>cv. McC</strain>
    </source>
</reference>
<reference key="2">
    <citation type="journal article" date="2009" name="Science">
        <title>The B73 maize genome: complexity, diversity, and dynamics.</title>
        <authorList>
            <person name="Schnable P.S."/>
            <person name="Ware D."/>
            <person name="Fulton R.S."/>
            <person name="Stein J.C."/>
            <person name="Wei F."/>
            <person name="Pasternak S."/>
            <person name="Liang C."/>
            <person name="Zhang J."/>
            <person name="Fulton L."/>
            <person name="Graves T.A."/>
            <person name="Minx P."/>
            <person name="Reily A.D."/>
            <person name="Courtney L."/>
            <person name="Kruchowski S.S."/>
            <person name="Tomlinson C."/>
            <person name="Strong C."/>
            <person name="Delehaunty K."/>
            <person name="Fronick C."/>
            <person name="Courtney B."/>
            <person name="Rock S.M."/>
            <person name="Belter E."/>
            <person name="Du F."/>
            <person name="Kim K."/>
            <person name="Abbott R.M."/>
            <person name="Cotton M."/>
            <person name="Levy A."/>
            <person name="Marchetto P."/>
            <person name="Ochoa K."/>
            <person name="Jackson S.M."/>
            <person name="Gillam B."/>
            <person name="Chen W."/>
            <person name="Yan L."/>
            <person name="Higginbotham J."/>
            <person name="Cardenas M."/>
            <person name="Waligorski J."/>
            <person name="Applebaum E."/>
            <person name="Phelps L."/>
            <person name="Falcone J."/>
            <person name="Kanchi K."/>
            <person name="Thane T."/>
            <person name="Scimone A."/>
            <person name="Thane N."/>
            <person name="Henke J."/>
            <person name="Wang T."/>
            <person name="Ruppert J."/>
            <person name="Shah N."/>
            <person name="Rotter K."/>
            <person name="Hodges J."/>
            <person name="Ingenthron E."/>
            <person name="Cordes M."/>
            <person name="Kohlberg S."/>
            <person name="Sgro J."/>
            <person name="Delgado B."/>
            <person name="Mead K."/>
            <person name="Chinwalla A."/>
            <person name="Leonard S."/>
            <person name="Crouse K."/>
            <person name="Collura K."/>
            <person name="Kudrna D."/>
            <person name="Currie J."/>
            <person name="He R."/>
            <person name="Angelova A."/>
            <person name="Rajasekar S."/>
            <person name="Mueller T."/>
            <person name="Lomeli R."/>
            <person name="Scara G."/>
            <person name="Ko A."/>
            <person name="Delaney K."/>
            <person name="Wissotski M."/>
            <person name="Lopez G."/>
            <person name="Campos D."/>
            <person name="Braidotti M."/>
            <person name="Ashley E."/>
            <person name="Golser W."/>
            <person name="Kim H."/>
            <person name="Lee S."/>
            <person name="Lin J."/>
            <person name="Dujmic Z."/>
            <person name="Kim W."/>
            <person name="Talag J."/>
            <person name="Zuccolo A."/>
            <person name="Fan C."/>
            <person name="Sebastian A."/>
            <person name="Kramer M."/>
            <person name="Spiegel L."/>
            <person name="Nascimento L."/>
            <person name="Zutavern T."/>
            <person name="Miller B."/>
            <person name="Ambroise C."/>
            <person name="Muller S."/>
            <person name="Spooner W."/>
            <person name="Narechania A."/>
            <person name="Ren L."/>
            <person name="Wei S."/>
            <person name="Kumari S."/>
            <person name="Faga B."/>
            <person name="Levy M.J."/>
            <person name="McMahan L."/>
            <person name="Van Buren P."/>
            <person name="Vaughn M.W."/>
            <person name="Ying K."/>
            <person name="Yeh C.-T."/>
            <person name="Emrich S.J."/>
            <person name="Jia Y."/>
            <person name="Kalyanaraman A."/>
            <person name="Hsia A.-P."/>
            <person name="Barbazuk W.B."/>
            <person name="Baucom R.S."/>
            <person name="Brutnell T.P."/>
            <person name="Carpita N.C."/>
            <person name="Chaparro C."/>
            <person name="Chia J.-M."/>
            <person name="Deragon J.-M."/>
            <person name="Estill J.C."/>
            <person name="Fu Y."/>
            <person name="Jeddeloh J.A."/>
            <person name="Han Y."/>
            <person name="Lee H."/>
            <person name="Li P."/>
            <person name="Lisch D.R."/>
            <person name="Liu S."/>
            <person name="Liu Z."/>
            <person name="Nagel D.H."/>
            <person name="McCann M.C."/>
            <person name="SanMiguel P."/>
            <person name="Myers A.M."/>
            <person name="Nettleton D."/>
            <person name="Nguyen J."/>
            <person name="Penning B.W."/>
            <person name="Ponnala L."/>
            <person name="Schneider K.L."/>
            <person name="Schwartz D.C."/>
            <person name="Sharma A."/>
            <person name="Soderlund C."/>
            <person name="Springer N.M."/>
            <person name="Sun Q."/>
            <person name="Wang H."/>
            <person name="Waterman M."/>
            <person name="Westerman R."/>
            <person name="Wolfgruber T.K."/>
            <person name="Yang L."/>
            <person name="Yu Y."/>
            <person name="Zhang L."/>
            <person name="Zhou S."/>
            <person name="Zhu Q."/>
            <person name="Bennetzen J.L."/>
            <person name="Dawe R.K."/>
            <person name="Jiang J."/>
            <person name="Jiang N."/>
            <person name="Presting G.G."/>
            <person name="Wessler S.R."/>
            <person name="Aluru S."/>
            <person name="Martienssen R.A."/>
            <person name="Clifton S.W."/>
            <person name="McCombie W.R."/>
            <person name="Wing R.A."/>
            <person name="Wilson R.K."/>
        </authorList>
    </citation>
    <scope>NUCLEOTIDE SEQUENCE [LARGE SCALE GENOMIC DNA]</scope>
    <source>
        <strain>cv. B73</strain>
    </source>
</reference>
<reference key="3">
    <citation type="journal article" date="2009" name="PLoS Genet.">
        <title>Sequencing, mapping, and analysis of 27,455 maize full-length cDNAs.</title>
        <authorList>
            <person name="Soderlund C."/>
            <person name="Descour A."/>
            <person name="Kudrna D."/>
            <person name="Bomhoff M."/>
            <person name="Boyd L."/>
            <person name="Currie J."/>
            <person name="Angelova A."/>
            <person name="Collura K."/>
            <person name="Wissotski M."/>
            <person name="Ashley E."/>
            <person name="Morrow D."/>
            <person name="Fernandes J."/>
            <person name="Walbot V."/>
            <person name="Yu Y."/>
        </authorList>
    </citation>
    <scope>NUCLEOTIDE SEQUENCE [MRNA] OF 2-627 (ISOFORMS 1 AND 2)</scope>
    <source>
        <strain>cv. B73</strain>
    </source>
</reference>
<reference key="4">
    <citation type="journal article" date="2019" name="Planta">
        <title>Biosynthesis and function of terpenoid defense compounds in maize (Zea mays).</title>
        <authorList>
            <person name="Block A.K."/>
            <person name="Vaughan M.M."/>
            <person name="Schmelz E.A."/>
            <person name="Christensen S.A."/>
        </authorList>
    </citation>
    <scope>REVIEW</scope>
</reference>
<dbReference type="EC" id="4.2.3.111" evidence="7"/>
<dbReference type="EC" id="4.2.3.-" evidence="7"/>
<dbReference type="EC" id="4.2.3.113" evidence="7"/>
<dbReference type="EC" id="4.2.3.15" evidence="7"/>
<dbReference type="EC" id="4.2.3.114" evidence="7"/>
<dbReference type="EC" id="4.2.3.16" evidence="7"/>
<dbReference type="EMBL" id="EF599329">
    <property type="protein sequence ID" value="ABR09288.1"/>
    <property type="molecule type" value="Genomic_DNA"/>
</dbReference>
<dbReference type="EMBL" id="EF599330">
    <property type="protein sequence ID" value="ABR09289.1"/>
    <property type="molecule type" value="mRNA"/>
</dbReference>
<dbReference type="EMBL" id="CM000782">
    <property type="protein sequence ID" value="AQK82824.1"/>
    <property type="molecule type" value="Genomic_DNA"/>
</dbReference>
<dbReference type="EMBL" id="BT033652">
    <property type="protein sequence ID" value="ACF78657.1"/>
    <property type="status" value="ALT_INIT"/>
    <property type="molecule type" value="mRNA"/>
</dbReference>
<dbReference type="EMBL" id="BT069885">
    <property type="protein sequence ID" value="ACN36782.1"/>
    <property type="molecule type" value="mRNA"/>
</dbReference>
<dbReference type="RefSeq" id="NP_001106050.2">
    <property type="nucleotide sequence ID" value="NM_001112580.2"/>
</dbReference>
<dbReference type="SMR" id="A0A1D6LTV0"/>
<dbReference type="STRING" id="4577.A0A1D6LTV0"/>
<dbReference type="PaxDb" id="4577-GRMZM2G030583_P03"/>
<dbReference type="GeneID" id="100125649"/>
<dbReference type="KEGG" id="zma:100125649"/>
<dbReference type="MaizeGDB" id="651520"/>
<dbReference type="InParanoid" id="A0A1D6LTV0"/>
<dbReference type="OMA" id="MDITEEC"/>
<dbReference type="OrthoDB" id="635298at2759"/>
<dbReference type="UniPathway" id="UPA00213"/>
<dbReference type="Proteomes" id="UP000007305">
    <property type="component" value="Unplaced"/>
</dbReference>
<dbReference type="ExpressionAtlas" id="A0A1D6LTV0">
    <property type="expression patterns" value="baseline and differential"/>
</dbReference>
<dbReference type="GO" id="GO:0009507">
    <property type="term" value="C:chloroplast"/>
    <property type="evidence" value="ECO:0000314"/>
    <property type="project" value="UniProtKB"/>
</dbReference>
<dbReference type="GO" id="GO:0050552">
    <property type="term" value="F:(4S)-limonene synthase activity"/>
    <property type="evidence" value="ECO:0007669"/>
    <property type="project" value="UniProtKB-EC"/>
</dbReference>
<dbReference type="GO" id="GO:0102903">
    <property type="term" value="F:gamma-terpinene synthase activity"/>
    <property type="evidence" value="ECO:0007669"/>
    <property type="project" value="UniProtKB-EC"/>
</dbReference>
<dbReference type="GO" id="GO:0000287">
    <property type="term" value="F:magnesium ion binding"/>
    <property type="evidence" value="ECO:0007669"/>
    <property type="project" value="InterPro"/>
</dbReference>
<dbReference type="GO" id="GO:0050551">
    <property type="term" value="F:myrcene synthase activity"/>
    <property type="evidence" value="ECO:0007669"/>
    <property type="project" value="UniProtKB-EC"/>
</dbReference>
<dbReference type="GO" id="GO:0010333">
    <property type="term" value="F:terpene synthase activity"/>
    <property type="evidence" value="ECO:0000314"/>
    <property type="project" value="UniProtKB"/>
</dbReference>
<dbReference type="GO" id="GO:0016102">
    <property type="term" value="P:diterpenoid biosynthetic process"/>
    <property type="evidence" value="ECO:0007669"/>
    <property type="project" value="InterPro"/>
</dbReference>
<dbReference type="GO" id="GO:0009611">
    <property type="term" value="P:response to wounding"/>
    <property type="evidence" value="ECO:0000270"/>
    <property type="project" value="UniProtKB"/>
</dbReference>
<dbReference type="GO" id="GO:0016114">
    <property type="term" value="P:terpenoid biosynthetic process"/>
    <property type="evidence" value="ECO:0000314"/>
    <property type="project" value="UniProtKB"/>
</dbReference>
<dbReference type="CDD" id="cd00684">
    <property type="entry name" value="Terpene_cyclase_plant_C1"/>
    <property type="match status" value="1"/>
</dbReference>
<dbReference type="FunFam" id="1.10.600.10:FF:000007">
    <property type="entry name" value="Isoprene synthase, chloroplastic"/>
    <property type="match status" value="1"/>
</dbReference>
<dbReference type="Gene3D" id="1.10.600.10">
    <property type="entry name" value="Farnesyl Diphosphate Synthase"/>
    <property type="match status" value="1"/>
</dbReference>
<dbReference type="Gene3D" id="1.50.10.130">
    <property type="entry name" value="Terpene synthase, N-terminal domain"/>
    <property type="match status" value="1"/>
</dbReference>
<dbReference type="InterPro" id="IPR008949">
    <property type="entry name" value="Isoprenoid_synthase_dom_sf"/>
</dbReference>
<dbReference type="InterPro" id="IPR034741">
    <property type="entry name" value="Terpene_cyclase-like_1_C"/>
</dbReference>
<dbReference type="InterPro" id="IPR044814">
    <property type="entry name" value="Terpene_cyclase_plant_C1"/>
</dbReference>
<dbReference type="InterPro" id="IPR001906">
    <property type="entry name" value="Terpene_synth_N"/>
</dbReference>
<dbReference type="InterPro" id="IPR036965">
    <property type="entry name" value="Terpene_synth_N_sf"/>
</dbReference>
<dbReference type="InterPro" id="IPR050148">
    <property type="entry name" value="Terpene_synthase-like"/>
</dbReference>
<dbReference type="InterPro" id="IPR005630">
    <property type="entry name" value="Terpene_synthase_metal-bd"/>
</dbReference>
<dbReference type="InterPro" id="IPR008930">
    <property type="entry name" value="Terpenoid_cyclase/PrenylTrfase"/>
</dbReference>
<dbReference type="PANTHER" id="PTHR31225:SF228">
    <property type="entry name" value="ALPHA-TERPINEOL SYNTHASE, CHLOROPLASTIC"/>
    <property type="match status" value="1"/>
</dbReference>
<dbReference type="PANTHER" id="PTHR31225">
    <property type="entry name" value="OS04G0344100 PROTEIN-RELATED"/>
    <property type="match status" value="1"/>
</dbReference>
<dbReference type="Pfam" id="PF01397">
    <property type="entry name" value="Terpene_synth"/>
    <property type="match status" value="1"/>
</dbReference>
<dbReference type="Pfam" id="PF03936">
    <property type="entry name" value="Terpene_synth_C"/>
    <property type="match status" value="1"/>
</dbReference>
<dbReference type="SFLD" id="SFLDS00005">
    <property type="entry name" value="Isoprenoid_Synthase_Type_I"/>
    <property type="match status" value="1"/>
</dbReference>
<dbReference type="SFLD" id="SFLDG01019">
    <property type="entry name" value="Terpene_Cyclase_Like_1_C_Termi"/>
    <property type="match status" value="1"/>
</dbReference>
<dbReference type="SUPFAM" id="SSF48239">
    <property type="entry name" value="Terpenoid cyclases/Protein prenyltransferases"/>
    <property type="match status" value="1"/>
</dbReference>
<dbReference type="SUPFAM" id="SSF48576">
    <property type="entry name" value="Terpenoid synthases"/>
    <property type="match status" value="1"/>
</dbReference>
<feature type="transit peptide" description="Chloroplast" evidence="5">
    <location>
        <begin position="1"/>
        <end position="53"/>
    </location>
</feature>
<feature type="chain" id="PRO_0000447523" description="Alpha-terpineol synthase, chloroplastic">
    <location>
        <begin position="54"/>
        <end position="627"/>
    </location>
</feature>
<feature type="region of interest" description="Disordered" evidence="6">
    <location>
        <begin position="13"/>
        <end position="90"/>
    </location>
</feature>
<feature type="short sequence motif" description="DDXXD motif" evidence="10">
    <location>
        <begin position="376"/>
        <end position="380"/>
    </location>
</feature>
<feature type="binding site" evidence="2">
    <location>
        <position position="339"/>
    </location>
    <ligand>
        <name>(2E)-geranyl diphosphate</name>
        <dbReference type="ChEBI" id="CHEBI:58057"/>
    </ligand>
</feature>
<feature type="binding site" evidence="2">
    <location>
        <position position="376"/>
    </location>
    <ligand>
        <name>(2E)-geranyl diphosphate</name>
        <dbReference type="ChEBI" id="CHEBI:58057"/>
    </ligand>
</feature>
<feature type="binding site" evidence="2">
    <location>
        <position position="376"/>
    </location>
    <ligand>
        <name>Mg(2+)</name>
        <dbReference type="ChEBI" id="CHEBI:18420"/>
        <label>1</label>
    </ligand>
</feature>
<feature type="binding site" evidence="2">
    <location>
        <position position="376"/>
    </location>
    <ligand>
        <name>Mg(2+)</name>
        <dbReference type="ChEBI" id="CHEBI:18420"/>
        <label>2</label>
    </ligand>
</feature>
<feature type="binding site" evidence="2">
    <location>
        <position position="380"/>
    </location>
    <ligand>
        <name>(2E)-geranyl diphosphate</name>
        <dbReference type="ChEBI" id="CHEBI:58057"/>
    </ligand>
</feature>
<feature type="binding site" evidence="2">
    <location>
        <position position="380"/>
    </location>
    <ligand>
        <name>Mg(2+)</name>
        <dbReference type="ChEBI" id="CHEBI:18420"/>
        <label>1</label>
    </ligand>
</feature>
<feature type="binding site" evidence="2">
    <location>
        <position position="380"/>
    </location>
    <ligand>
        <name>Mg(2+)</name>
        <dbReference type="ChEBI" id="CHEBI:18420"/>
        <label>2</label>
    </ligand>
</feature>
<feature type="binding site" evidence="2">
    <location>
        <position position="518"/>
    </location>
    <ligand>
        <name>(2E)-geranyl diphosphate</name>
        <dbReference type="ChEBI" id="CHEBI:58057"/>
    </ligand>
</feature>
<feature type="binding site" evidence="2">
    <location>
        <position position="521"/>
    </location>
    <ligand>
        <name>(2E)-geranyl diphosphate</name>
        <dbReference type="ChEBI" id="CHEBI:58057"/>
    </ligand>
</feature>
<feature type="binding site" evidence="2">
    <location>
        <position position="521"/>
    </location>
    <ligand>
        <name>Mg(2+)</name>
        <dbReference type="ChEBI" id="CHEBI:18420"/>
        <label>3</label>
    </ligand>
</feature>
<feature type="binding site" evidence="2">
    <location>
        <position position="525"/>
    </location>
    <ligand>
        <name>Mg(2+)</name>
        <dbReference type="ChEBI" id="CHEBI:18420"/>
        <label>3</label>
    </ligand>
</feature>
<feature type="binding site" evidence="2">
    <location>
        <position position="529"/>
    </location>
    <ligand>
        <name>Mg(2+)</name>
        <dbReference type="ChEBI" id="CHEBI:18420"/>
        <label>3</label>
    </ligand>
</feature>
<feature type="splice variant" id="VSP_060200" description="In isoform 2.">
    <original>MAGITGVMNMKLAARPSSGRHSRGCRPAVVPSAGKQMLLVRRHPPGSASWPTRATGGGGGGVPAGATAADSSGQAKEEEEEDRASRNTSSFEPSIWGDFFLTYSSPLATSSAQKARMVHRAEQLKKQVAKLIAASGACSLYHRIHLVDALERLCLDYLFEDEINDMVTQIHNVDVSGCDLQTVAMWFYLLRNHGYRVSSDVVFAKFRDEQGGFAANNPRDLLNLYNAACLRTHGETILDEAASFTSKCLKSLAPYTYMEASLASEIKRALEIPLPRSVRIYGAKSRIAEYGNQTEANELVLELAKLNYNLVQLQHQEELKIIT</original>
    <variation>MS</variation>
    <location>
        <begin position="1"/>
        <end position="323"/>
    </location>
</feature>
<feature type="splice variant" id="VSP_060201" description="In isoform 2.">
    <location>
        <begin position="547"/>
        <end position="627"/>
    </location>
</feature>
<feature type="sequence conflict" description="In Ref. 1; ABR09288/ABR09289." evidence="10" ref="1">
    <original>K</original>
    <variation>E</variation>
    <location>
        <position position="126"/>
    </location>
</feature>
<feature type="sequence conflict" description="In Ref. 1; ABR09288/ABR09289." evidence="10" ref="1">
    <original>N</original>
    <variation>K</variation>
    <location>
        <position position="292"/>
    </location>
</feature>
<feature type="sequence conflict" description="In Ref. 1; ABR09288/ABR09289." evidence="10" ref="1">
    <original>Q</original>
    <variation>R</variation>
    <location>
        <position position="332"/>
    </location>
</feature>
<feature type="sequence conflict" description="In Ref. 3; ACF78657." evidence="10" ref="3">
    <original>Y</original>
    <variation>D</variation>
    <location>
        <position position="439"/>
    </location>
</feature>
<feature type="sequence conflict" description="In Ref. 1; ABR09288/ABR09289." evidence="10" ref="1">
    <original>S</original>
    <variation>N</variation>
    <location>
        <position position="532"/>
    </location>
</feature>
<gene>
    <name evidence="9" type="primary">TPS26</name>
    <name evidence="12" type="ORF">ZEAMMB73_Zm00001d037092</name>
</gene>
<accession>A0A1D6LTV0</accession>
<accession>A5YZT5</accession>
<accession>B4F964</accession>
<accession>C0PNL6</accession>
<comment type="function">
    <text evidence="7 9">Component of the volatile terpenes biosynthesis pathways (PubMed:30187155). Mediates the synthesis of a blend of monoterpenes. Converts mainly geranyl diphosphate to alpha-terpineol. Also triggers the biosynthesis of minor monoterpenes including limonene, gamma-terpinene, beta-myrcene, terpinolene and 4-terpineol (PubMed:18218975).</text>
</comment>
<comment type="catalytic activity">
    <reaction evidence="7">
        <text>(2E)-geranyl diphosphate + H2O = (S)-alpha-terpineol + diphosphate</text>
        <dbReference type="Rhea" id="RHEA:32551"/>
        <dbReference type="ChEBI" id="CHEBI:128"/>
        <dbReference type="ChEBI" id="CHEBI:15377"/>
        <dbReference type="ChEBI" id="CHEBI:33019"/>
        <dbReference type="ChEBI" id="CHEBI:58057"/>
        <dbReference type="EC" id="4.2.3.111"/>
    </reaction>
    <physiologicalReaction direction="left-to-right" evidence="7">
        <dbReference type="Rhea" id="RHEA:32552"/>
    </physiologicalReaction>
</comment>
<comment type="catalytic activity">
    <reaction evidence="7">
        <text>(2E)-geranyl diphosphate = (4S)-limonene + diphosphate</text>
        <dbReference type="Rhea" id="RHEA:12869"/>
        <dbReference type="ChEBI" id="CHEBI:15383"/>
        <dbReference type="ChEBI" id="CHEBI:33019"/>
        <dbReference type="ChEBI" id="CHEBI:58057"/>
        <dbReference type="EC" id="4.2.3.16"/>
    </reaction>
    <physiologicalReaction direction="left-to-right" evidence="7">
        <dbReference type="Rhea" id="RHEA:12870"/>
    </physiologicalReaction>
</comment>
<comment type="catalytic activity">
    <reaction evidence="7">
        <text>(2E)-geranyl diphosphate = gamma-terpinene + diphosphate</text>
        <dbReference type="Rhea" id="RHEA:32559"/>
        <dbReference type="ChEBI" id="CHEBI:10577"/>
        <dbReference type="ChEBI" id="CHEBI:33019"/>
        <dbReference type="ChEBI" id="CHEBI:58057"/>
        <dbReference type="EC" id="4.2.3.114"/>
    </reaction>
    <physiologicalReaction direction="left-to-right" evidence="7">
        <dbReference type="Rhea" id="RHEA:32560"/>
    </physiologicalReaction>
</comment>
<comment type="catalytic activity">
    <reaction evidence="7">
        <text>(2E)-geranyl diphosphate = beta-myrcene + diphosphate</text>
        <dbReference type="Rhea" id="RHEA:16965"/>
        <dbReference type="ChEBI" id="CHEBI:17221"/>
        <dbReference type="ChEBI" id="CHEBI:33019"/>
        <dbReference type="ChEBI" id="CHEBI:58057"/>
        <dbReference type="EC" id="4.2.3.15"/>
    </reaction>
    <physiologicalReaction direction="left-to-right" evidence="7">
        <dbReference type="Rhea" id="RHEA:16966"/>
    </physiologicalReaction>
</comment>
<comment type="catalytic activity">
    <reaction evidence="7">
        <text>(2E)-geranyl diphosphate = terpinolene + diphosphate</text>
        <dbReference type="Rhea" id="RHEA:25500"/>
        <dbReference type="ChEBI" id="CHEBI:9457"/>
        <dbReference type="ChEBI" id="CHEBI:33019"/>
        <dbReference type="ChEBI" id="CHEBI:58057"/>
        <dbReference type="EC" id="4.2.3.113"/>
    </reaction>
    <physiologicalReaction direction="left-to-right" evidence="7">
        <dbReference type="Rhea" id="RHEA:25501"/>
    </physiologicalReaction>
</comment>
<comment type="catalytic activity">
    <reaction evidence="7">
        <text>(2E)-geranyl diphosphate + H2O = 4-terpineol + diphosphate</text>
        <dbReference type="Rhea" id="RHEA:60028"/>
        <dbReference type="ChEBI" id="CHEBI:15377"/>
        <dbReference type="ChEBI" id="CHEBI:33019"/>
        <dbReference type="ChEBI" id="CHEBI:58057"/>
        <dbReference type="ChEBI" id="CHEBI:78884"/>
    </reaction>
    <physiologicalReaction direction="left-to-right" evidence="7">
        <dbReference type="Rhea" id="RHEA:60029"/>
    </physiologicalReaction>
</comment>
<comment type="cofactor">
    <cofactor evidence="1">
        <name>Mg(2+)</name>
        <dbReference type="ChEBI" id="CHEBI:18420"/>
    </cofactor>
    <cofactor evidence="1">
        <name>Mn(2+)</name>
        <dbReference type="ChEBI" id="CHEBI:29035"/>
    </cofactor>
    <text evidence="3">Binds 3 Mg(2+) or Mn(2+) ions per subunit.</text>
</comment>
<comment type="pathway">
    <text evidence="11">Secondary metabolite biosynthesis; terpenoid biosynthesis.</text>
</comment>
<comment type="subunit">
    <text evidence="4">Monomer.</text>
</comment>
<comment type="subcellular location">
    <subcellularLocation>
        <location evidence="7">Plastid</location>
        <location evidence="7">Chloroplast</location>
    </subcellularLocation>
</comment>
<comment type="alternative products">
    <event type="alternative splicing"/>
    <isoform>
        <id>A0A1D6LTV0-1</id>
        <name>1</name>
        <sequence type="displayed"/>
    </isoform>
    <isoform>
        <id>A0A1D6LTV0-2</id>
        <name>2</name>
        <sequence type="described" ref="VSP_060200 VSP_060201"/>
    </isoform>
</comment>
<comment type="tissue specificity">
    <text evidence="7">Expressed in seedling leaf sheaths and roots.</text>
</comment>
<comment type="induction">
    <text evidence="7">Induced by wounding in roots and leaves sheaths.</text>
</comment>
<comment type="domain">
    <text evidence="10">The Asp-Asp-Xaa-Xaa-Asp/Glu (DDXXD/E) motif is important for the catalytic activity, presumably through binding to Mg(2+).</text>
</comment>
<comment type="similarity">
    <text evidence="10">Belongs to the terpene synthase family. Tpsb subfamily.</text>
</comment>
<comment type="sequence caution" evidence="10">
    <conflict type="erroneous initiation">
        <sequence resource="EMBL-CDS" id="ACF78657"/>
    </conflict>
    <text>Truncated N-terminus.</text>
</comment>
<protein>
    <recommendedName>
        <fullName evidence="8">Alpha-terpineol synthase, chloroplastic</fullName>
        <ecNumber evidence="7">4.2.3.111</ecNumber>
    </recommendedName>
    <alternativeName>
        <fullName evidence="8">4-terpineol synthase</fullName>
        <ecNumber evidence="7">4.2.3.-</ecNumber>
    </alternativeName>
    <alternativeName>
        <fullName evidence="8">Alpha-terpinolene synthase</fullName>
        <ecNumber evidence="7">4.2.3.113</ecNumber>
    </alternativeName>
    <alternativeName>
        <fullName evidence="8">Beta-myrcene synthase</fullName>
        <ecNumber evidence="7">4.2.3.15</ecNumber>
    </alternativeName>
    <alternativeName>
        <fullName evidence="8">Gamma-terpinene synthase</fullName>
        <ecNumber evidence="7">4.2.3.114</ecNumber>
    </alternativeName>
    <alternativeName>
        <fullName evidence="8">Limonene synthase</fullName>
        <ecNumber evidence="7">4.2.3.16</ecNumber>
    </alternativeName>
    <alternativeName>
        <fullName evidence="9">Terpene synthase 26, chloroplastic</fullName>
    </alternativeName>
</protein>
<proteinExistence type="evidence at protein level"/>